<protein>
    <recommendedName>
        <fullName>CMP-N-acetylneuraminate-beta-galactosamide-alpha-2,3-sialyltransferase 2</fullName>
        <shortName>Alpha 2,3-ST 2</shortName>
        <shortName>Beta-galactoside alpha-2,3-sialyltransferase 2</shortName>
        <ecNumber evidence="6 7">2.4.3.4</ecNumber>
    </recommendedName>
    <alternativeName>
        <fullName>Gal-NAc6S</fullName>
    </alternativeName>
    <alternativeName>
        <fullName evidence="9">Gal-beta-1,3-GalNAc-alpha-2,3-sialyltransferase</fullName>
    </alternativeName>
    <alternativeName>
        <fullName>Monosialoganglioside sialyltransferase</fullName>
        <ecNumber evidence="12">2.4.3.2</ecNumber>
    </alternativeName>
    <alternativeName>
        <fullName>ST3Gal II</fullName>
        <shortName>ST3GalII</shortName>
    </alternativeName>
    <alternativeName>
        <fullName>ST3GalA.2</fullName>
    </alternativeName>
    <alternativeName>
        <fullName>Sialyltransferase 4B</fullName>
        <shortName>SIAT4-B</shortName>
    </alternativeName>
</protein>
<dbReference type="EC" id="2.4.3.4" evidence="6 7"/>
<dbReference type="EC" id="2.4.3.2" evidence="12"/>
<dbReference type="EMBL" id="X76989">
    <property type="protein sequence ID" value="CAA54294.1"/>
    <property type="molecule type" value="mRNA"/>
</dbReference>
<dbReference type="EMBL" id="AK053827">
    <property type="protein sequence ID" value="BAC35543.1"/>
    <property type="molecule type" value="mRNA"/>
</dbReference>
<dbReference type="EMBL" id="AK131653">
    <property type="protein sequence ID" value="BAE20742.1"/>
    <property type="molecule type" value="mRNA"/>
</dbReference>
<dbReference type="EMBL" id="CH466525">
    <property type="protein sequence ID" value="EDL11478.1"/>
    <property type="molecule type" value="Genomic_DNA"/>
</dbReference>
<dbReference type="EMBL" id="BC066064">
    <property type="protein sequence ID" value="AAH66064.1"/>
    <property type="molecule type" value="mRNA"/>
</dbReference>
<dbReference type="CCDS" id="CCDS22667.1"/>
<dbReference type="PIR" id="A54420">
    <property type="entry name" value="A54420"/>
</dbReference>
<dbReference type="RefSeq" id="NP_001411820.1">
    <property type="nucleotide sequence ID" value="NM_001424891.1"/>
</dbReference>
<dbReference type="RefSeq" id="NP_001411821.1">
    <property type="nucleotide sequence ID" value="NM_001424892.1"/>
</dbReference>
<dbReference type="RefSeq" id="NP_033205.2">
    <property type="nucleotide sequence ID" value="NM_009179.4"/>
</dbReference>
<dbReference type="RefSeq" id="XP_006530849.1">
    <property type="nucleotide sequence ID" value="XM_006530786.2"/>
</dbReference>
<dbReference type="RefSeq" id="XP_006530850.1">
    <property type="nucleotide sequence ID" value="XM_006530787.4"/>
</dbReference>
<dbReference type="RefSeq" id="XP_006530851.1">
    <property type="nucleotide sequence ID" value="XM_006530788.3"/>
</dbReference>
<dbReference type="RefSeq" id="XP_017168113.1">
    <property type="nucleotide sequence ID" value="XM_017312624.1"/>
</dbReference>
<dbReference type="RefSeq" id="XP_036009743.1">
    <property type="nucleotide sequence ID" value="XM_036153850.1"/>
</dbReference>
<dbReference type="SMR" id="Q11204"/>
<dbReference type="FunCoup" id="Q11204">
    <property type="interactions" value="281"/>
</dbReference>
<dbReference type="STRING" id="10090.ENSMUSP00000034197"/>
<dbReference type="SwissLipids" id="SLP:000001389"/>
<dbReference type="CAZy" id="GT29">
    <property type="family name" value="Glycosyltransferase Family 29"/>
</dbReference>
<dbReference type="GlyCosmos" id="Q11204">
    <property type="glycosylation" value="1 site, No reported glycans"/>
</dbReference>
<dbReference type="GlyGen" id="Q11204">
    <property type="glycosylation" value="1 site, 1 N-linked glycan (1 site)"/>
</dbReference>
<dbReference type="PhosphoSitePlus" id="Q11204"/>
<dbReference type="SwissPalm" id="Q11204"/>
<dbReference type="PaxDb" id="10090-ENSMUSP00000034197"/>
<dbReference type="ProteomicsDB" id="257232"/>
<dbReference type="Pumba" id="Q11204"/>
<dbReference type="Antibodypedia" id="2529">
    <property type="antibodies" value="138 antibodies from 24 providers"/>
</dbReference>
<dbReference type="DNASU" id="20444"/>
<dbReference type="Ensembl" id="ENSMUST00000034197.5">
    <property type="protein sequence ID" value="ENSMUSP00000034197.5"/>
    <property type="gene ID" value="ENSMUSG00000031749.13"/>
</dbReference>
<dbReference type="GeneID" id="20444"/>
<dbReference type="KEGG" id="mmu:20444"/>
<dbReference type="UCSC" id="uc009nlk.2">
    <property type="organism name" value="mouse"/>
</dbReference>
<dbReference type="AGR" id="MGI:99427"/>
<dbReference type="CTD" id="6483"/>
<dbReference type="MGI" id="MGI:99427">
    <property type="gene designation" value="St3gal2"/>
</dbReference>
<dbReference type="VEuPathDB" id="HostDB:ENSMUSG00000031749"/>
<dbReference type="eggNOG" id="KOG2692">
    <property type="taxonomic scope" value="Eukaryota"/>
</dbReference>
<dbReference type="GeneTree" id="ENSGT00940000156356"/>
<dbReference type="HOGENOM" id="CLU_032020_2_0_1"/>
<dbReference type="InParanoid" id="Q11204"/>
<dbReference type="OMA" id="CSLRFWF"/>
<dbReference type="OrthoDB" id="10264956at2759"/>
<dbReference type="PhylomeDB" id="Q11204"/>
<dbReference type="TreeFam" id="TF354325"/>
<dbReference type="BRENDA" id="2.4.99.2">
    <property type="organism ID" value="3474"/>
</dbReference>
<dbReference type="Reactome" id="R-MMU-2022854">
    <property type="pathway name" value="Keratan sulfate biosynthesis"/>
</dbReference>
<dbReference type="Reactome" id="R-MMU-4085001">
    <property type="pathway name" value="Sialic acid metabolism"/>
</dbReference>
<dbReference type="Reactome" id="R-MMU-977068">
    <property type="pathway name" value="Termination of O-glycan biosynthesis"/>
</dbReference>
<dbReference type="Reactome" id="R-MMU-9840309">
    <property type="pathway name" value="Glycosphingolipid biosynthesis"/>
</dbReference>
<dbReference type="UniPathway" id="UPA00378"/>
<dbReference type="BioGRID-ORCS" id="20444">
    <property type="hits" value="0 hits in 80 CRISPR screens"/>
</dbReference>
<dbReference type="ChiTaRS" id="St3gal2">
    <property type="organism name" value="mouse"/>
</dbReference>
<dbReference type="PRO" id="PR:Q11204"/>
<dbReference type="Proteomes" id="UP000000589">
    <property type="component" value="Chromosome 8"/>
</dbReference>
<dbReference type="RNAct" id="Q11204">
    <property type="molecule type" value="protein"/>
</dbReference>
<dbReference type="Bgee" id="ENSMUSG00000031749">
    <property type="expression patterns" value="Expressed in cerebellar vermis and 235 other cell types or tissues"/>
</dbReference>
<dbReference type="ExpressionAtlas" id="Q11204">
    <property type="expression patterns" value="baseline and differential"/>
</dbReference>
<dbReference type="GO" id="GO:0005576">
    <property type="term" value="C:extracellular region"/>
    <property type="evidence" value="ECO:0007669"/>
    <property type="project" value="UniProtKB-SubCell"/>
</dbReference>
<dbReference type="GO" id="GO:0032580">
    <property type="term" value="C:Golgi cisterna membrane"/>
    <property type="evidence" value="ECO:0007669"/>
    <property type="project" value="UniProtKB-SubCell"/>
</dbReference>
<dbReference type="GO" id="GO:0000139">
    <property type="term" value="C:Golgi membrane"/>
    <property type="evidence" value="ECO:0000250"/>
    <property type="project" value="UniProtKB"/>
</dbReference>
<dbReference type="GO" id="GO:0047288">
    <property type="term" value="F:beta-D-galactosyl-(1-&gt;3)-N-acetyl-beta-D-galactosaminide alpha-2,3- sialyltransferase"/>
    <property type="evidence" value="ECO:0007669"/>
    <property type="project" value="Ensembl"/>
</dbReference>
<dbReference type="GO" id="GO:0003836">
    <property type="term" value="F:beta-galactoside (CMP) alpha-2,3-sialyltransferase activity"/>
    <property type="evidence" value="ECO:0000314"/>
    <property type="project" value="UniProtKB"/>
</dbReference>
<dbReference type="GO" id="GO:0042803">
    <property type="term" value="F:protein homodimerization activity"/>
    <property type="evidence" value="ECO:0000250"/>
    <property type="project" value="UniProtKB"/>
</dbReference>
<dbReference type="GO" id="GO:0010706">
    <property type="term" value="P:ganglioside biosynthetic process via lactosylceramide"/>
    <property type="evidence" value="ECO:0000314"/>
    <property type="project" value="UniProtKB"/>
</dbReference>
<dbReference type="GO" id="GO:0010707">
    <property type="term" value="P:globoside biosynthetic process via lactosylceramide"/>
    <property type="evidence" value="ECO:0000250"/>
    <property type="project" value="UniProtKB"/>
</dbReference>
<dbReference type="GO" id="GO:0030259">
    <property type="term" value="P:lipid glycosylation"/>
    <property type="evidence" value="ECO:0007669"/>
    <property type="project" value="Ensembl"/>
</dbReference>
<dbReference type="GO" id="GO:0009312">
    <property type="term" value="P:oligosaccharide biosynthetic process"/>
    <property type="evidence" value="ECO:0007669"/>
    <property type="project" value="Ensembl"/>
</dbReference>
<dbReference type="GO" id="GO:0006486">
    <property type="term" value="P:protein glycosylation"/>
    <property type="evidence" value="ECO:0000314"/>
    <property type="project" value="MGI"/>
</dbReference>
<dbReference type="GO" id="GO:0097503">
    <property type="term" value="P:sialylation"/>
    <property type="evidence" value="ECO:0007669"/>
    <property type="project" value="Ensembl"/>
</dbReference>
<dbReference type="CDD" id="cd23979">
    <property type="entry name" value="GT29_ST3GAL2"/>
    <property type="match status" value="1"/>
</dbReference>
<dbReference type="FunFam" id="3.90.1480.20:FF:000002">
    <property type="entry name" value="CMP-N-acetylneuraminate-beta-galactosamide- alpha-2,3-sialyltransferase 2"/>
    <property type="match status" value="1"/>
</dbReference>
<dbReference type="Gene3D" id="3.90.1480.20">
    <property type="entry name" value="Glycosyl transferase family 29"/>
    <property type="match status" value="1"/>
</dbReference>
<dbReference type="InterPro" id="IPR051757">
    <property type="entry name" value="Beta-gal_alpha2-3_sialyltrans"/>
</dbReference>
<dbReference type="InterPro" id="IPR001675">
    <property type="entry name" value="Glyco_trans_29"/>
</dbReference>
<dbReference type="InterPro" id="IPR038578">
    <property type="entry name" value="GT29-like_sf"/>
</dbReference>
<dbReference type="InterPro" id="IPR012163">
    <property type="entry name" value="Sialyl_trans"/>
</dbReference>
<dbReference type="PANTHER" id="PTHR46032">
    <property type="entry name" value="ALPHA-2,3-SIALYLTRANSFERASE ST3GAL I ISOFORM X1"/>
    <property type="match status" value="1"/>
</dbReference>
<dbReference type="PANTHER" id="PTHR46032:SF4">
    <property type="entry name" value="CMP-N-ACETYLNEURAMINATE-BETA-GALACTOSAMIDE-ALPHA-2,3-SIALYLTRANSFERASE 2"/>
    <property type="match status" value="1"/>
</dbReference>
<dbReference type="Pfam" id="PF00777">
    <property type="entry name" value="Glyco_transf_29"/>
    <property type="match status" value="1"/>
</dbReference>
<dbReference type="PIRSF" id="PIRSF005557">
    <property type="entry name" value="Sialyl_trans"/>
    <property type="match status" value="1"/>
</dbReference>
<sequence length="350" mass="40130">MKCSLRVWFLSMAFLLVFIMSLLFTYSHHSMATLPYLDSGALGGTHRVKLVPGYSGLQRLGKEGLLGRNCACSRCMGDASTSEWFDSHFDGNISPVWTRDNMNLPPDVQRWWMMLQPQFKSHNTNEVLEKLFQIVPGENPYRFRDPQQCRRCAVVGNSGNLRGSGYGQEVDSHNFIMRMNQAPTVGFEKDVGSRTTHHFMYPESAKNLPANVSFVLVPFKALDLMWIASALSTGQIRFTYAPVKSFLRVDKEKVQIYNPAFFKYIHDRWTEHHGRYPSTGMLVLFFALHVCDEVNVYGFGADSRGNWHHYWENNRYAGEFRKTGVHDADFEAHIIDMLAKASKIEVYRGN</sequence>
<comment type="function">
    <text evidence="2 4 5 6 7">A beta-galactoside alpha2-3 sialyltransferase primarily involved in terminal sialylation of ganglio and globo series glycolipids (PubMed:8144500, PubMed:9184827). Catalyzes the transfer of sialic acid (N-acetyl-neuraminic acid; Neu5Ac) from the nucleotide sugar donor CMP-Neu5Ac onto acceptor Galbeta-(1-&gt;3)-GalNAc-terminated glycoconjugates through an alpha2-3 linkage. Sialylates GM1/GM1a, GA1/asialo-GM1 and GD1b gangliosides to form GD1a, GM1b and GT1b, respectively (PubMed:8144500, PubMed:9184827). Together with ST3GAL3, primarily responsible for biosynthesis of brain GD1a and GT1b that function as ligands for myelin-associated glycoprotein MAG on axons, regulating MAG expression and axonal myelin stability and regeneration (PubMed:22735313). Via GT1b regulates TLR2 signaling in spinal cord microglia in response to nerve injury (PubMed:32030804). Responsible for the sialylation of the pluripotent stem cell- and cancer stem cell-associated antigen SSEA3, forming SSEA4 (By similarity). Sialylates with low efficiency asialofetuin, presumably onto O-glycosidically linked Galbeta-(1-&gt;3)-GalNAc-O-Ser (PubMed:8144500).</text>
</comment>
<comment type="catalytic activity">
    <reaction evidence="6 7">
        <text>a beta-D-galactosyl-(1-&gt;3)-N-acetyl-alpha-D-galactosaminyl derivative + CMP-N-acetyl-beta-neuraminate = an N-acetyl-alpha-neuraminyl-(2-&gt;3)-beta-D-galactosyl-(1-&gt;3)-N-acetyl-alpha-D-galactosaminyl derivative + CMP + H(+)</text>
        <dbReference type="Rhea" id="RHEA:21616"/>
        <dbReference type="ChEBI" id="CHEBI:15378"/>
        <dbReference type="ChEBI" id="CHEBI:57812"/>
        <dbReference type="ChEBI" id="CHEBI:60377"/>
        <dbReference type="ChEBI" id="CHEBI:133470"/>
        <dbReference type="ChEBI" id="CHEBI:139596"/>
        <dbReference type="EC" id="2.4.3.4"/>
    </reaction>
    <physiologicalReaction direction="left-to-right" evidence="12 13">
        <dbReference type="Rhea" id="RHEA:21617"/>
    </physiologicalReaction>
</comment>
<comment type="catalytic activity">
    <reaction evidence="12">
        <text>a ganglioside GM1 (d18:1(4E)) + CMP-N-acetyl-beta-neuraminate = a ganglioside GD1a (d18:1(4E)) + CMP + H(+)</text>
        <dbReference type="Rhea" id="RHEA:18021"/>
        <dbReference type="ChEBI" id="CHEBI:15378"/>
        <dbReference type="ChEBI" id="CHEBI:57812"/>
        <dbReference type="ChEBI" id="CHEBI:60377"/>
        <dbReference type="ChEBI" id="CHEBI:77709"/>
        <dbReference type="ChEBI" id="CHEBI:78445"/>
        <dbReference type="EC" id="2.4.3.2"/>
    </reaction>
    <physiologicalReaction direction="left-to-right" evidence="12">
        <dbReference type="Rhea" id="RHEA:18022"/>
    </physiologicalReaction>
</comment>
<comment type="catalytic activity">
    <reaction evidence="6">
        <text>ganglioside GM1 (d18:1(4E)/18:0) + CMP-N-acetyl-beta-neuraminate = ganglioside GD1a (18:1(4E)/18:0) + CMP + H(+)</text>
        <dbReference type="Rhea" id="RHEA:48248"/>
        <dbReference type="ChEBI" id="CHEBI:15378"/>
        <dbReference type="ChEBI" id="CHEBI:57812"/>
        <dbReference type="ChEBI" id="CHEBI:60377"/>
        <dbReference type="ChEBI" id="CHEBI:73110"/>
        <dbReference type="ChEBI" id="CHEBI:90153"/>
    </reaction>
    <physiologicalReaction direction="left-to-right" evidence="12">
        <dbReference type="Rhea" id="RHEA:48249"/>
    </physiologicalReaction>
</comment>
<comment type="catalytic activity">
    <reaction evidence="6 7">
        <text>a ganglioside GA1 + CMP-N-acetyl-beta-neuraminate = a ganglioside GM1b + CMP + H(+)</text>
        <dbReference type="Rhea" id="RHEA:48244"/>
        <dbReference type="ChEBI" id="CHEBI:15378"/>
        <dbReference type="ChEBI" id="CHEBI:57812"/>
        <dbReference type="ChEBI" id="CHEBI:60377"/>
        <dbReference type="ChEBI" id="CHEBI:88069"/>
        <dbReference type="ChEBI" id="CHEBI:90151"/>
    </reaction>
    <physiologicalReaction direction="left-to-right" evidence="12 13">
        <dbReference type="Rhea" id="RHEA:48245"/>
    </physiologicalReaction>
</comment>
<comment type="catalytic activity">
    <reaction evidence="12">
        <text>a ganglioside GA1 (d18:1(4E)) + CMP-N-acetyl-beta-neuraminate = a ganglioside GM1b (d18:1(4E)) + CMP + H(+)</text>
        <dbReference type="Rhea" id="RHEA:47560"/>
        <dbReference type="ChEBI" id="CHEBI:15378"/>
        <dbReference type="ChEBI" id="CHEBI:27938"/>
        <dbReference type="ChEBI" id="CHEBI:57812"/>
        <dbReference type="ChEBI" id="CHEBI:60377"/>
        <dbReference type="ChEBI" id="CHEBI:78568"/>
    </reaction>
    <physiologicalReaction direction="left-to-right" evidence="12">
        <dbReference type="Rhea" id="RHEA:47561"/>
    </physiologicalReaction>
</comment>
<comment type="catalytic activity">
    <reaction evidence="6">
        <text>a ganglioside GD1b + CMP-N-acetyl-beta-neuraminate = a ganglioside GT1b + CMP + H(+)</text>
        <dbReference type="Rhea" id="RHEA:48240"/>
        <dbReference type="ChEBI" id="CHEBI:15378"/>
        <dbReference type="ChEBI" id="CHEBI:57812"/>
        <dbReference type="ChEBI" id="CHEBI:60377"/>
        <dbReference type="ChEBI" id="CHEBI:82939"/>
        <dbReference type="ChEBI" id="CHEBI:82940"/>
    </reaction>
    <physiologicalReaction direction="left-to-right" evidence="12">
        <dbReference type="Rhea" id="RHEA:48241"/>
    </physiologicalReaction>
</comment>
<comment type="catalytic activity">
    <reaction evidence="12">
        <text>a ganglioside GD1b (d18:1(4E)) + CMP-N-acetyl-beta-neuraminate = a ganglioside GT1b (d18:1(4E)) + CMP + H(+)</text>
        <dbReference type="Rhea" id="RHEA:47572"/>
        <dbReference type="ChEBI" id="CHEBI:15378"/>
        <dbReference type="ChEBI" id="CHEBI:57812"/>
        <dbReference type="ChEBI" id="CHEBI:60377"/>
        <dbReference type="ChEBI" id="CHEBI:78452"/>
        <dbReference type="ChEBI" id="CHEBI:87785"/>
    </reaction>
    <physiologicalReaction direction="left-to-right" evidence="12">
        <dbReference type="Rhea" id="RHEA:47573"/>
    </physiologicalReaction>
</comment>
<comment type="catalytic activity">
    <reaction evidence="2">
        <text>a globoside GalGb4Cer + CMP-N-acetyl-beta-neuraminate = a globoside MSGG + CMP + H(+)</text>
        <dbReference type="Rhea" id="RHEA:65372"/>
        <dbReference type="ChEBI" id="CHEBI:15378"/>
        <dbReference type="ChEBI" id="CHEBI:57812"/>
        <dbReference type="ChEBI" id="CHEBI:60377"/>
        <dbReference type="ChEBI" id="CHEBI:140623"/>
        <dbReference type="ChEBI" id="CHEBI:140691"/>
    </reaction>
    <physiologicalReaction direction="left-to-right" evidence="2">
        <dbReference type="Rhea" id="RHEA:65373"/>
    </physiologicalReaction>
</comment>
<comment type="biophysicochemical properties">
    <kinetics>
        <KM evidence="7">2.3 mM for Gal-beta-1,3-GlcNAc</KM>
        <KM evidence="7">0.16 mM for Gal-beta-1,3-GalNAc</KM>
        <KM evidence="6">0.63 mM for Gal-beta-1,3-GalNAc</KM>
        <KM evidence="6">0.83 mM for GM1</KM>
        <KM evidence="6">0.67 mM for asialo-GM1</KM>
        <text evidence="7">Vmax is 10 fold higher with Gal-beta-1,3-GalNAc than with Gal-beta-1,3-GlcNAc as substrate.</text>
    </kinetics>
    <phDependence>
        <text evidence="7">Optimum pH is 6.4.</text>
    </phDependence>
</comment>
<comment type="pathway">
    <text evidence="12">Protein modification; protein glycosylation.</text>
</comment>
<comment type="pathway">
    <text evidence="11 12">Glycolipid biosynthesis.</text>
</comment>
<comment type="subunit">
    <text evidence="2">Homodimer; disulfide-linked. Homodimer formation occurs in the endoplasmic reticulum.</text>
</comment>
<comment type="subcellular location">
    <subcellularLocation>
        <location evidence="2">Golgi apparatus</location>
        <location evidence="2">Golgi stack membrane</location>
        <topology>Single-pass type II membrane protein</topology>
    </subcellularLocation>
    <subcellularLocation>
        <location>Secreted</location>
    </subcellularLocation>
    <text evidence="2">Membrane-bound form distributed along the Golgi cisternae, mainly in proximal compartments (By similarity). Secreted into the body fluid.</text>
</comment>
<comment type="tissue specificity">
    <text evidence="5 6">Strongly expressed in brain and liver and to a lesser extent in heart and kidney. Scarcely detectable in lung, pancreas, spleen and submaxillary gland (PubMed:8144500). Expressed in L5 dorsal root ganglion (DRG) neurons (at protein level) (PubMed:32030804).</text>
</comment>
<comment type="induction">
    <text evidence="5">Up-regulated in DRG neurons in response to nerve injury.</text>
</comment>
<comment type="PTM">
    <text>The soluble form derives from the membrane form by proteolytic processing.</text>
</comment>
<comment type="PTM">
    <text evidence="2">N-glycosylated; necessary for proper exit from endoplasmic reticulum and trafficking to the Golgi apparatus.</text>
</comment>
<comment type="disruption phenotype">
    <text evidence="4 5">No visible phenotype under physiological conditions; due to the redundancy with ST3GAL3. Simultaneous knockdown of ST3GAL2 and ST3GAL3 results in markedly fewer offspring and impaired nervous system function at weaning (PubMed:22735313). Knockout mice show reduced nerve injury-induced neuropathic pain in response to noxious stimuli (hyperalgesia) and to normally innocuous stimuli (allodynia) (PubMed:32030804).</text>
</comment>
<comment type="similarity">
    <text evidence="10">Belongs to the glycosyltransferase 29 family.</text>
</comment>
<comment type="online information" name="Functional Glycomics Gateway - GTase">
    <link uri="http://www.functionalglycomics.org/glycomics/molecule/jsp/glycoEnzyme/viewGlycoEnzyme.jsp?gbpId=gt_mou_643"/>
    <text>ST3Gal II</text>
</comment>
<keyword id="KW-1015">Disulfide bond</keyword>
<keyword id="KW-0325">Glycoprotein</keyword>
<keyword id="KW-0328">Glycosyltransferase</keyword>
<keyword id="KW-0333">Golgi apparatus</keyword>
<keyword id="KW-0443">Lipid metabolism</keyword>
<keyword id="KW-0472">Membrane</keyword>
<keyword id="KW-1185">Reference proteome</keyword>
<keyword id="KW-0964">Secreted</keyword>
<keyword id="KW-0735">Signal-anchor</keyword>
<keyword id="KW-0808">Transferase</keyword>
<keyword id="KW-0812">Transmembrane</keyword>
<keyword id="KW-1133">Transmembrane helix</keyword>
<evidence type="ECO:0000250" key="1"/>
<evidence type="ECO:0000250" key="2">
    <source>
        <dbReference type="UniProtKB" id="Q16842"/>
    </source>
</evidence>
<evidence type="ECO:0000255" key="3"/>
<evidence type="ECO:0000269" key="4">
    <source>
    </source>
</evidence>
<evidence type="ECO:0000269" key="5">
    <source>
    </source>
</evidence>
<evidence type="ECO:0000269" key="6">
    <source>
    </source>
</evidence>
<evidence type="ECO:0000269" key="7">
    <source>
    </source>
</evidence>
<evidence type="ECO:0000303" key="8">
    <source>
    </source>
</evidence>
<evidence type="ECO:0000303" key="9">
    <source>
    </source>
</evidence>
<evidence type="ECO:0000305" key="10"/>
<evidence type="ECO:0000305" key="11">
    <source>
    </source>
</evidence>
<evidence type="ECO:0000305" key="12">
    <source>
    </source>
</evidence>
<evidence type="ECO:0000305" key="13">
    <source>
    </source>
</evidence>
<evidence type="ECO:0000312" key="14">
    <source>
        <dbReference type="MGI" id="MGI:99427"/>
    </source>
</evidence>
<accession>Q11204</accession>
<accession>Q8BPL0</accession>
<name>SIA4B_MOUSE</name>
<reference key="1">
    <citation type="journal article" date="1994" name="J. Biol. Chem.">
        <title>Cloning and expression of cDNA for a new type of Gal beta 1,3GalNAc alpha 2,3-sialyltransferase.</title>
        <authorList>
            <person name="Lee Y.-C."/>
            <person name="Kojima N."/>
            <person name="Wada E."/>
            <person name="Kurosawa N."/>
            <person name="Nakaoka T."/>
            <person name="Hamamoto T."/>
            <person name="Tsuji S."/>
        </authorList>
    </citation>
    <scope>NUCLEOTIDE SEQUENCE [MRNA]</scope>
    <scope>FUNCTION</scope>
    <scope>CATALYTIC ACTIVITY</scope>
    <scope>SUBSTRATE SPECIFICITY</scope>
    <scope>TISSUE SPECIFICITY</scope>
    <scope>BIOPHYSICOCHEMICAL PROPERTIES</scope>
    <scope>PATHWAY</scope>
    <source>
        <tissue>Brain</tissue>
    </source>
</reference>
<reference key="2">
    <citation type="journal article" date="2005" name="Science">
        <title>The transcriptional landscape of the mammalian genome.</title>
        <authorList>
            <person name="Carninci P."/>
            <person name="Kasukawa T."/>
            <person name="Katayama S."/>
            <person name="Gough J."/>
            <person name="Frith M.C."/>
            <person name="Maeda N."/>
            <person name="Oyama R."/>
            <person name="Ravasi T."/>
            <person name="Lenhard B."/>
            <person name="Wells C."/>
            <person name="Kodzius R."/>
            <person name="Shimokawa K."/>
            <person name="Bajic V.B."/>
            <person name="Brenner S.E."/>
            <person name="Batalov S."/>
            <person name="Forrest A.R."/>
            <person name="Zavolan M."/>
            <person name="Davis M.J."/>
            <person name="Wilming L.G."/>
            <person name="Aidinis V."/>
            <person name="Allen J.E."/>
            <person name="Ambesi-Impiombato A."/>
            <person name="Apweiler R."/>
            <person name="Aturaliya R.N."/>
            <person name="Bailey T.L."/>
            <person name="Bansal M."/>
            <person name="Baxter L."/>
            <person name="Beisel K.W."/>
            <person name="Bersano T."/>
            <person name="Bono H."/>
            <person name="Chalk A.M."/>
            <person name="Chiu K.P."/>
            <person name="Choudhary V."/>
            <person name="Christoffels A."/>
            <person name="Clutterbuck D.R."/>
            <person name="Crowe M.L."/>
            <person name="Dalla E."/>
            <person name="Dalrymple B.P."/>
            <person name="de Bono B."/>
            <person name="Della Gatta G."/>
            <person name="di Bernardo D."/>
            <person name="Down T."/>
            <person name="Engstrom P."/>
            <person name="Fagiolini M."/>
            <person name="Faulkner G."/>
            <person name="Fletcher C.F."/>
            <person name="Fukushima T."/>
            <person name="Furuno M."/>
            <person name="Futaki S."/>
            <person name="Gariboldi M."/>
            <person name="Georgii-Hemming P."/>
            <person name="Gingeras T.R."/>
            <person name="Gojobori T."/>
            <person name="Green R.E."/>
            <person name="Gustincich S."/>
            <person name="Harbers M."/>
            <person name="Hayashi Y."/>
            <person name="Hensch T.K."/>
            <person name="Hirokawa N."/>
            <person name="Hill D."/>
            <person name="Huminiecki L."/>
            <person name="Iacono M."/>
            <person name="Ikeo K."/>
            <person name="Iwama A."/>
            <person name="Ishikawa T."/>
            <person name="Jakt M."/>
            <person name="Kanapin A."/>
            <person name="Katoh M."/>
            <person name="Kawasawa Y."/>
            <person name="Kelso J."/>
            <person name="Kitamura H."/>
            <person name="Kitano H."/>
            <person name="Kollias G."/>
            <person name="Krishnan S.P."/>
            <person name="Kruger A."/>
            <person name="Kummerfeld S.K."/>
            <person name="Kurochkin I.V."/>
            <person name="Lareau L.F."/>
            <person name="Lazarevic D."/>
            <person name="Lipovich L."/>
            <person name="Liu J."/>
            <person name="Liuni S."/>
            <person name="McWilliam S."/>
            <person name="Madan Babu M."/>
            <person name="Madera M."/>
            <person name="Marchionni L."/>
            <person name="Matsuda H."/>
            <person name="Matsuzawa S."/>
            <person name="Miki H."/>
            <person name="Mignone F."/>
            <person name="Miyake S."/>
            <person name="Morris K."/>
            <person name="Mottagui-Tabar S."/>
            <person name="Mulder N."/>
            <person name="Nakano N."/>
            <person name="Nakauchi H."/>
            <person name="Ng P."/>
            <person name="Nilsson R."/>
            <person name="Nishiguchi S."/>
            <person name="Nishikawa S."/>
            <person name="Nori F."/>
            <person name="Ohara O."/>
            <person name="Okazaki Y."/>
            <person name="Orlando V."/>
            <person name="Pang K.C."/>
            <person name="Pavan W.J."/>
            <person name="Pavesi G."/>
            <person name="Pesole G."/>
            <person name="Petrovsky N."/>
            <person name="Piazza S."/>
            <person name="Reed J."/>
            <person name="Reid J.F."/>
            <person name="Ring B.Z."/>
            <person name="Ringwald M."/>
            <person name="Rost B."/>
            <person name="Ruan Y."/>
            <person name="Salzberg S.L."/>
            <person name="Sandelin A."/>
            <person name="Schneider C."/>
            <person name="Schoenbach C."/>
            <person name="Sekiguchi K."/>
            <person name="Semple C.A."/>
            <person name="Seno S."/>
            <person name="Sessa L."/>
            <person name="Sheng Y."/>
            <person name="Shibata Y."/>
            <person name="Shimada H."/>
            <person name="Shimada K."/>
            <person name="Silva D."/>
            <person name="Sinclair B."/>
            <person name="Sperling S."/>
            <person name="Stupka E."/>
            <person name="Sugiura K."/>
            <person name="Sultana R."/>
            <person name="Takenaka Y."/>
            <person name="Taki K."/>
            <person name="Tammoja K."/>
            <person name="Tan S.L."/>
            <person name="Tang S."/>
            <person name="Taylor M.S."/>
            <person name="Tegner J."/>
            <person name="Teichmann S.A."/>
            <person name="Ueda H.R."/>
            <person name="van Nimwegen E."/>
            <person name="Verardo R."/>
            <person name="Wei C.L."/>
            <person name="Yagi K."/>
            <person name="Yamanishi H."/>
            <person name="Zabarovsky E."/>
            <person name="Zhu S."/>
            <person name="Zimmer A."/>
            <person name="Hide W."/>
            <person name="Bult C."/>
            <person name="Grimmond S.M."/>
            <person name="Teasdale R.D."/>
            <person name="Liu E.T."/>
            <person name="Brusic V."/>
            <person name="Quackenbush J."/>
            <person name="Wahlestedt C."/>
            <person name="Mattick J.S."/>
            <person name="Hume D.A."/>
            <person name="Kai C."/>
            <person name="Sasaki D."/>
            <person name="Tomaru Y."/>
            <person name="Fukuda S."/>
            <person name="Kanamori-Katayama M."/>
            <person name="Suzuki M."/>
            <person name="Aoki J."/>
            <person name="Arakawa T."/>
            <person name="Iida J."/>
            <person name="Imamura K."/>
            <person name="Itoh M."/>
            <person name="Kato T."/>
            <person name="Kawaji H."/>
            <person name="Kawagashira N."/>
            <person name="Kawashima T."/>
            <person name="Kojima M."/>
            <person name="Kondo S."/>
            <person name="Konno H."/>
            <person name="Nakano K."/>
            <person name="Ninomiya N."/>
            <person name="Nishio T."/>
            <person name="Okada M."/>
            <person name="Plessy C."/>
            <person name="Shibata K."/>
            <person name="Shiraki T."/>
            <person name="Suzuki S."/>
            <person name="Tagami M."/>
            <person name="Waki K."/>
            <person name="Watahiki A."/>
            <person name="Okamura-Oho Y."/>
            <person name="Suzuki H."/>
            <person name="Kawai J."/>
            <person name="Hayashizaki Y."/>
        </authorList>
    </citation>
    <scope>NUCLEOTIDE SEQUENCE [LARGE SCALE MRNA]</scope>
    <source>
        <strain>C57BL/6J</strain>
        <tissue>Cerebellum</tissue>
        <tissue>Eye</tissue>
    </source>
</reference>
<reference key="3">
    <citation type="submission" date="2005-07" db="EMBL/GenBank/DDBJ databases">
        <authorList>
            <person name="Mural R.J."/>
            <person name="Adams M.D."/>
            <person name="Myers E.W."/>
            <person name="Smith H.O."/>
            <person name="Venter J.C."/>
        </authorList>
    </citation>
    <scope>NUCLEOTIDE SEQUENCE [LARGE SCALE GENOMIC DNA]</scope>
</reference>
<reference key="4">
    <citation type="journal article" date="2004" name="Genome Res.">
        <title>The status, quality, and expansion of the NIH full-length cDNA project: the Mammalian Gene Collection (MGC).</title>
        <authorList>
            <consortium name="The MGC Project Team"/>
        </authorList>
    </citation>
    <scope>NUCLEOTIDE SEQUENCE [LARGE SCALE MRNA]</scope>
    <source>
        <strain>C57BL/6J</strain>
        <tissue>Brain</tissue>
    </source>
</reference>
<reference key="5">
    <citation type="journal article" date="1997" name="Glycobiology">
        <title>Mouse beta-galactoside alpha2,3-sialyltransferases: comparison of in vitro substrate specificities and tissue specific expression.</title>
        <authorList>
            <person name="Kono M."/>
            <person name="Ohyama Y."/>
            <person name="Lee Y.-C."/>
            <person name="Hamamoto T."/>
            <person name="Kojima N."/>
            <person name="Tsuji S."/>
        </authorList>
    </citation>
    <scope>FUNCTION</scope>
    <scope>CATALYTIC ACTIVITY</scope>
    <scope>TISSUE SPECIFICITY</scope>
    <scope>BIOPHYSICOCHEMICAL PROPERTIES</scope>
    <source>
        <tissue>Brain</tissue>
    </source>
</reference>
<reference key="6">
    <citation type="journal article" date="2012" name="Glycobiology">
        <title>Biosynthesis of the major brain gangliosides GD1a and GT1b.</title>
        <authorList>
            <person name="Sturgill E.R."/>
            <person name="Aoki K."/>
            <person name="Lopez P.H."/>
            <person name="Colacurcio D."/>
            <person name="Vajn K."/>
            <person name="Lorenzini I."/>
            <person name="Majic S."/>
            <person name="Yang W.H."/>
            <person name="Heffer M."/>
            <person name="Tiemeyer M."/>
            <person name="Marth J.D."/>
            <person name="Schnaar R.L."/>
        </authorList>
    </citation>
    <scope>FUNCTION</scope>
    <scope>PATHWAY</scope>
    <scope>DISRUPTION PHENOTYPE</scope>
</reference>
<reference key="7">
    <citation type="journal article" date="2020" name="EMBO J.">
        <title>GT1b functions as a novel endogenous agonist of toll-like receptor 2 inducing neuropathic pain.</title>
        <authorList>
            <person name="Lim H."/>
            <person name="Lee J."/>
            <person name="You B."/>
            <person name="Oh J.H."/>
            <person name="Mok H.J."/>
            <person name="Kim Y.S."/>
            <person name="Yoon B.E."/>
            <person name="Kim B.G."/>
            <person name="Back S.K."/>
            <person name="Park J.S."/>
            <person name="Kim K.P."/>
            <person name="Schnaar R.L."/>
            <person name="Lee S.J."/>
        </authorList>
    </citation>
    <scope>FUNCTION</scope>
    <scope>TISSUE SPECIFICITY</scope>
    <scope>INDUCTION</scope>
    <scope>DISRUPTION PHENOTYPE</scope>
</reference>
<proteinExistence type="evidence at protein level"/>
<organism>
    <name type="scientific">Mus musculus</name>
    <name type="common">Mouse</name>
    <dbReference type="NCBI Taxonomy" id="10090"/>
    <lineage>
        <taxon>Eukaryota</taxon>
        <taxon>Metazoa</taxon>
        <taxon>Chordata</taxon>
        <taxon>Craniata</taxon>
        <taxon>Vertebrata</taxon>
        <taxon>Euteleostomi</taxon>
        <taxon>Mammalia</taxon>
        <taxon>Eutheria</taxon>
        <taxon>Euarchontoglires</taxon>
        <taxon>Glires</taxon>
        <taxon>Rodentia</taxon>
        <taxon>Myomorpha</taxon>
        <taxon>Muroidea</taxon>
        <taxon>Muridae</taxon>
        <taxon>Murinae</taxon>
        <taxon>Mus</taxon>
        <taxon>Mus</taxon>
    </lineage>
</organism>
<gene>
    <name evidence="8 14" type="primary">St3gal2</name>
    <name type="synonym">Siat4b</name>
    <name type="synonym">Siat5</name>
</gene>
<feature type="chain" id="PRO_0000149259" description="CMP-N-acetylneuraminate-beta-galactosamide-alpha-2,3-sialyltransferase 2">
    <location>
        <begin position="1"/>
        <end position="350"/>
    </location>
</feature>
<feature type="topological domain" description="Cytoplasmic" evidence="3">
    <location>
        <begin position="1"/>
        <end position="6"/>
    </location>
</feature>
<feature type="transmembrane region" description="Helical; Signal-anchor for type II membrane protein" evidence="3">
    <location>
        <begin position="7"/>
        <end position="27"/>
    </location>
</feature>
<feature type="topological domain" description="Lumenal" evidence="3">
    <location>
        <begin position="28"/>
        <end position="350"/>
    </location>
</feature>
<feature type="binding site" evidence="1">
    <location>
        <position position="116"/>
    </location>
    <ligand>
        <name>substrate</name>
    </ligand>
</feature>
<feature type="binding site" evidence="1">
    <location>
        <position position="157"/>
    </location>
    <ligand>
        <name>substrate</name>
    </ligand>
</feature>
<feature type="binding site" evidence="1">
    <location>
        <position position="180"/>
    </location>
    <ligand>
        <name>substrate</name>
    </ligand>
</feature>
<feature type="binding site" evidence="1">
    <location>
        <position position="240"/>
    </location>
    <ligand>
        <name>substrate</name>
    </ligand>
</feature>
<feature type="binding site" evidence="1">
    <location>
        <position position="276"/>
    </location>
    <ligand>
        <name>substrate</name>
    </ligand>
</feature>
<feature type="binding site" evidence="1">
    <location>
        <position position="280"/>
    </location>
    <ligand>
        <name>substrate</name>
    </ligand>
</feature>
<feature type="binding site" evidence="1">
    <location>
        <position position="300"/>
    </location>
    <ligand>
        <name>substrate</name>
    </ligand>
</feature>
<feature type="binding site" evidence="1">
    <location>
        <position position="309"/>
    </location>
    <ligand>
        <name>substrate</name>
    </ligand>
</feature>
<feature type="binding site" evidence="1">
    <location>
        <position position="326"/>
    </location>
    <ligand>
        <name>substrate</name>
    </ligand>
</feature>
<feature type="glycosylation site" description="N-linked (GlcNAc...) asparagine" evidence="3">
    <location>
        <position position="211"/>
    </location>
</feature>
<feature type="disulfide bond" evidence="1">
    <location>
        <begin position="70"/>
        <end position="75"/>
    </location>
</feature>
<feature type="disulfide bond" evidence="1">
    <location>
        <begin position="72"/>
        <end position="149"/>
    </location>
</feature>
<feature type="disulfide bond" evidence="1">
    <location>
        <begin position="152"/>
        <end position="291"/>
    </location>
</feature>
<feature type="sequence conflict" description="In Ref. 1; CAA54294." evidence="10" ref="1">
    <original>HY</original>
    <variation>RH</variation>
    <location>
        <begin position="309"/>
        <end position="310"/>
    </location>
</feature>